<accession>A0PU15</accession>
<sequence length="479" mass="50583">MPRFVDRVVIHTRAGSGGNGCASVHREKFKPLGGPDGGNGGRGGSVVFVVDPQVHTLLDFHFRPHVTAASGKQGMGSNRDGAAGADLEVKVPDGTVVLDDNGRLLADLVGAGTRFEAAAGGRGGLGNAALASRARKAPGFALLGEPGQARDLTLELKTVADVGLVGFPSAGKSSLVSVISAAKPKIADYPFTTLVPNLGVVAAGGHSFTVADVPGLIPGASQGRGLGLDFLRHIERCAVLVHVVNCATAEPGRDPISDIDALEAELAAYQPTLQGDAVLDDLAERPRAVVLNKIDVPEARELAEFVEDELAQRGWPVFLVSTVTRENLQPLIFGLWQMVSEYNAARPQAAPRRPVIRPVPVDDSGFDVQADGHGGFVVTGARPERWIGQTNFDNDEAVGYLADRLVRLGVEEELLRLGAKPGCAVTIGEMTFDWEPQTPAGGHVAMSGRGTDVRLERSDRVGAAERKAARRQRRERDDD</sequence>
<proteinExistence type="inferred from homology"/>
<evidence type="ECO:0000255" key="1">
    <source>
        <dbReference type="HAMAP-Rule" id="MF_01454"/>
    </source>
</evidence>
<evidence type="ECO:0000255" key="2">
    <source>
        <dbReference type="PROSITE-ProRule" id="PRU01229"/>
    </source>
</evidence>
<evidence type="ECO:0000255" key="3">
    <source>
        <dbReference type="PROSITE-ProRule" id="PRU01231"/>
    </source>
</evidence>
<evidence type="ECO:0000256" key="4">
    <source>
        <dbReference type="SAM" id="MobiDB-lite"/>
    </source>
</evidence>
<comment type="function">
    <text evidence="1">An essential GTPase which binds GTP, GDP and possibly (p)ppGpp with moderate affinity, with high nucleotide exchange rates and a fairly low GTP hydrolysis rate. Plays a role in control of the cell cycle, stress response, ribosome biogenesis and in those bacteria that undergo differentiation, in morphogenesis control.</text>
</comment>
<comment type="cofactor">
    <cofactor evidence="1">
        <name>Mg(2+)</name>
        <dbReference type="ChEBI" id="CHEBI:18420"/>
    </cofactor>
</comment>
<comment type="subunit">
    <text evidence="1">Monomer.</text>
</comment>
<comment type="subcellular location">
    <subcellularLocation>
        <location evidence="1">Cytoplasm</location>
    </subcellularLocation>
</comment>
<comment type="similarity">
    <text evidence="1">Belongs to the TRAFAC class OBG-HflX-like GTPase superfamily. OBG GTPase family.</text>
</comment>
<organism>
    <name type="scientific">Mycobacterium ulcerans (strain Agy99)</name>
    <dbReference type="NCBI Taxonomy" id="362242"/>
    <lineage>
        <taxon>Bacteria</taxon>
        <taxon>Bacillati</taxon>
        <taxon>Actinomycetota</taxon>
        <taxon>Actinomycetes</taxon>
        <taxon>Mycobacteriales</taxon>
        <taxon>Mycobacteriaceae</taxon>
        <taxon>Mycobacterium</taxon>
        <taxon>Mycobacterium ulcerans group</taxon>
    </lineage>
</organism>
<dbReference type="EC" id="3.6.5.-" evidence="1"/>
<dbReference type="EMBL" id="CP000325">
    <property type="protein sequence ID" value="ABL05834.1"/>
    <property type="molecule type" value="Genomic_DNA"/>
</dbReference>
<dbReference type="RefSeq" id="WP_011741439.1">
    <property type="nucleotide sequence ID" value="NC_008611.1"/>
</dbReference>
<dbReference type="SMR" id="A0PU15"/>
<dbReference type="KEGG" id="mul:MUL_3712"/>
<dbReference type="eggNOG" id="COG0536">
    <property type="taxonomic scope" value="Bacteria"/>
</dbReference>
<dbReference type="HOGENOM" id="CLU_011747_2_1_11"/>
<dbReference type="Proteomes" id="UP000000765">
    <property type="component" value="Chromosome"/>
</dbReference>
<dbReference type="GO" id="GO:0005737">
    <property type="term" value="C:cytoplasm"/>
    <property type="evidence" value="ECO:0007669"/>
    <property type="project" value="UniProtKB-SubCell"/>
</dbReference>
<dbReference type="GO" id="GO:0005525">
    <property type="term" value="F:GTP binding"/>
    <property type="evidence" value="ECO:0007669"/>
    <property type="project" value="UniProtKB-UniRule"/>
</dbReference>
<dbReference type="GO" id="GO:0003924">
    <property type="term" value="F:GTPase activity"/>
    <property type="evidence" value="ECO:0007669"/>
    <property type="project" value="UniProtKB-UniRule"/>
</dbReference>
<dbReference type="GO" id="GO:0000287">
    <property type="term" value="F:magnesium ion binding"/>
    <property type="evidence" value="ECO:0007669"/>
    <property type="project" value="InterPro"/>
</dbReference>
<dbReference type="GO" id="GO:0042254">
    <property type="term" value="P:ribosome biogenesis"/>
    <property type="evidence" value="ECO:0007669"/>
    <property type="project" value="UniProtKB-UniRule"/>
</dbReference>
<dbReference type="CDD" id="cd01898">
    <property type="entry name" value="Obg"/>
    <property type="match status" value="1"/>
</dbReference>
<dbReference type="FunFam" id="2.70.210.12:FF:000001">
    <property type="entry name" value="GTPase Obg"/>
    <property type="match status" value="1"/>
</dbReference>
<dbReference type="Gene3D" id="3.30.300.350">
    <property type="entry name" value="GTP-binding protein OBG, C-terminal domain"/>
    <property type="match status" value="1"/>
</dbReference>
<dbReference type="Gene3D" id="2.70.210.12">
    <property type="entry name" value="GTP1/OBG domain"/>
    <property type="match status" value="1"/>
</dbReference>
<dbReference type="Gene3D" id="3.40.50.300">
    <property type="entry name" value="P-loop containing nucleotide triphosphate hydrolases"/>
    <property type="match status" value="1"/>
</dbReference>
<dbReference type="HAMAP" id="MF_01454">
    <property type="entry name" value="GTPase_Obg"/>
    <property type="match status" value="1"/>
</dbReference>
<dbReference type="InterPro" id="IPR031167">
    <property type="entry name" value="G_OBG"/>
</dbReference>
<dbReference type="InterPro" id="IPR006073">
    <property type="entry name" value="GTP-bd"/>
</dbReference>
<dbReference type="InterPro" id="IPR014100">
    <property type="entry name" value="GTP-bd_Obg/CgtA"/>
</dbReference>
<dbReference type="InterPro" id="IPR036346">
    <property type="entry name" value="GTP-bd_prot_GTP1/OBG_C_sf"/>
</dbReference>
<dbReference type="InterPro" id="IPR006074">
    <property type="entry name" value="GTP1-OBG_CS"/>
</dbReference>
<dbReference type="InterPro" id="IPR006169">
    <property type="entry name" value="GTP1_OBG_dom"/>
</dbReference>
<dbReference type="InterPro" id="IPR036726">
    <property type="entry name" value="GTP1_OBG_dom_sf"/>
</dbReference>
<dbReference type="InterPro" id="IPR045086">
    <property type="entry name" value="OBG_GTPase"/>
</dbReference>
<dbReference type="InterPro" id="IPR015349">
    <property type="entry name" value="OCT_dom"/>
</dbReference>
<dbReference type="InterPro" id="IPR027417">
    <property type="entry name" value="P-loop_NTPase"/>
</dbReference>
<dbReference type="NCBIfam" id="TIGR02729">
    <property type="entry name" value="Obg_CgtA"/>
    <property type="match status" value="1"/>
</dbReference>
<dbReference type="NCBIfam" id="TIGR03595">
    <property type="entry name" value="Obg_CgtA_exten"/>
    <property type="match status" value="1"/>
</dbReference>
<dbReference type="NCBIfam" id="NF008954">
    <property type="entry name" value="PRK12296.1"/>
    <property type="match status" value="1"/>
</dbReference>
<dbReference type="NCBIfam" id="NF008955">
    <property type="entry name" value="PRK12297.1"/>
    <property type="match status" value="1"/>
</dbReference>
<dbReference type="NCBIfam" id="NF008956">
    <property type="entry name" value="PRK12299.1"/>
    <property type="match status" value="1"/>
</dbReference>
<dbReference type="PANTHER" id="PTHR11702">
    <property type="entry name" value="DEVELOPMENTALLY REGULATED GTP-BINDING PROTEIN-RELATED"/>
    <property type="match status" value="1"/>
</dbReference>
<dbReference type="PANTHER" id="PTHR11702:SF31">
    <property type="entry name" value="MITOCHONDRIAL RIBOSOME-ASSOCIATED GTPASE 2"/>
    <property type="match status" value="1"/>
</dbReference>
<dbReference type="Pfam" id="PF09269">
    <property type="entry name" value="DUF1967"/>
    <property type="match status" value="1"/>
</dbReference>
<dbReference type="Pfam" id="PF01018">
    <property type="entry name" value="GTP1_OBG"/>
    <property type="match status" value="1"/>
</dbReference>
<dbReference type="Pfam" id="PF01926">
    <property type="entry name" value="MMR_HSR1"/>
    <property type="match status" value="1"/>
</dbReference>
<dbReference type="PRINTS" id="PR00326">
    <property type="entry name" value="GTP1OBG"/>
</dbReference>
<dbReference type="SUPFAM" id="SSF102741">
    <property type="entry name" value="Obg GTP-binding protein C-terminal domain"/>
    <property type="match status" value="1"/>
</dbReference>
<dbReference type="SUPFAM" id="SSF82051">
    <property type="entry name" value="Obg GTP-binding protein N-terminal domain"/>
    <property type="match status" value="1"/>
</dbReference>
<dbReference type="SUPFAM" id="SSF52540">
    <property type="entry name" value="P-loop containing nucleoside triphosphate hydrolases"/>
    <property type="match status" value="1"/>
</dbReference>
<dbReference type="PROSITE" id="PS51710">
    <property type="entry name" value="G_OBG"/>
    <property type="match status" value="1"/>
</dbReference>
<dbReference type="PROSITE" id="PS00905">
    <property type="entry name" value="GTP1_OBG"/>
    <property type="match status" value="1"/>
</dbReference>
<dbReference type="PROSITE" id="PS51883">
    <property type="entry name" value="OBG"/>
    <property type="match status" value="1"/>
</dbReference>
<dbReference type="PROSITE" id="PS51881">
    <property type="entry name" value="OCT"/>
    <property type="match status" value="1"/>
</dbReference>
<name>OBG_MYCUA</name>
<feature type="chain" id="PRO_0000386064" description="GTPase Obg">
    <location>
        <begin position="1"/>
        <end position="479"/>
    </location>
</feature>
<feature type="domain" description="Obg" evidence="3">
    <location>
        <begin position="2"/>
        <end position="159"/>
    </location>
</feature>
<feature type="domain" description="OBG-type G" evidence="1">
    <location>
        <begin position="160"/>
        <end position="340"/>
    </location>
</feature>
<feature type="domain" description="OCT" evidence="2">
    <location>
        <begin position="358"/>
        <end position="436"/>
    </location>
</feature>
<feature type="region of interest" description="Disordered" evidence="4">
    <location>
        <begin position="438"/>
        <end position="479"/>
    </location>
</feature>
<feature type="compositionally biased region" description="Basic and acidic residues" evidence="4">
    <location>
        <begin position="451"/>
        <end position="467"/>
    </location>
</feature>
<feature type="binding site" evidence="1">
    <location>
        <begin position="166"/>
        <end position="173"/>
    </location>
    <ligand>
        <name>GTP</name>
        <dbReference type="ChEBI" id="CHEBI:37565"/>
    </ligand>
</feature>
<feature type="binding site" evidence="1">
    <location>
        <position position="173"/>
    </location>
    <ligand>
        <name>Mg(2+)</name>
        <dbReference type="ChEBI" id="CHEBI:18420"/>
    </ligand>
</feature>
<feature type="binding site" evidence="1">
    <location>
        <begin position="191"/>
        <end position="195"/>
    </location>
    <ligand>
        <name>GTP</name>
        <dbReference type="ChEBI" id="CHEBI:37565"/>
    </ligand>
</feature>
<feature type="binding site" evidence="1">
    <location>
        <position position="193"/>
    </location>
    <ligand>
        <name>Mg(2+)</name>
        <dbReference type="ChEBI" id="CHEBI:18420"/>
    </ligand>
</feature>
<feature type="binding site" evidence="1">
    <location>
        <begin position="212"/>
        <end position="215"/>
    </location>
    <ligand>
        <name>GTP</name>
        <dbReference type="ChEBI" id="CHEBI:37565"/>
    </ligand>
</feature>
<feature type="binding site" evidence="1">
    <location>
        <begin position="292"/>
        <end position="295"/>
    </location>
    <ligand>
        <name>GTP</name>
        <dbReference type="ChEBI" id="CHEBI:37565"/>
    </ligand>
</feature>
<feature type="binding site" evidence="1">
    <location>
        <begin position="321"/>
        <end position="323"/>
    </location>
    <ligand>
        <name>GTP</name>
        <dbReference type="ChEBI" id="CHEBI:37565"/>
    </ligand>
</feature>
<keyword id="KW-0963">Cytoplasm</keyword>
<keyword id="KW-0342">GTP-binding</keyword>
<keyword id="KW-0378">Hydrolase</keyword>
<keyword id="KW-0460">Magnesium</keyword>
<keyword id="KW-0479">Metal-binding</keyword>
<keyword id="KW-0547">Nucleotide-binding</keyword>
<gene>
    <name evidence="1" type="primary">obg</name>
    <name type="ordered locus">MUL_3712</name>
</gene>
<reference key="1">
    <citation type="journal article" date="2007" name="Genome Res.">
        <title>Reductive evolution and niche adaptation inferred from the genome of Mycobacterium ulcerans, the causative agent of Buruli ulcer.</title>
        <authorList>
            <person name="Stinear T.P."/>
            <person name="Seemann T."/>
            <person name="Pidot S."/>
            <person name="Frigui W."/>
            <person name="Reysset G."/>
            <person name="Garnier T."/>
            <person name="Meurice G."/>
            <person name="Simon D."/>
            <person name="Bouchier C."/>
            <person name="Ma L."/>
            <person name="Tichit M."/>
            <person name="Porter J.L."/>
            <person name="Ryan J."/>
            <person name="Johnson P.D.R."/>
            <person name="Davies J.K."/>
            <person name="Jenkin G.A."/>
            <person name="Small P.L.C."/>
            <person name="Jones L.M."/>
            <person name="Tekaia F."/>
            <person name="Laval F."/>
            <person name="Daffe M."/>
            <person name="Parkhill J."/>
            <person name="Cole S.T."/>
        </authorList>
    </citation>
    <scope>NUCLEOTIDE SEQUENCE [LARGE SCALE GENOMIC DNA]</scope>
    <source>
        <strain>Agy99</strain>
    </source>
</reference>
<protein>
    <recommendedName>
        <fullName evidence="1">GTPase Obg</fullName>
        <ecNumber evidence="1">3.6.5.-</ecNumber>
    </recommendedName>
    <alternativeName>
        <fullName evidence="1">GTP-binding protein Obg</fullName>
    </alternativeName>
</protein>